<gene>
    <name evidence="2" type="primary">infB</name>
    <name type="ordered locus">Kole_1403</name>
</gene>
<reference key="1">
    <citation type="submission" date="2009-06" db="EMBL/GenBank/DDBJ databases">
        <title>Complete sequence of Thermotogales bacterium TBF 19.5.1.</title>
        <authorList>
            <consortium name="US DOE Joint Genome Institute"/>
            <person name="Lucas S."/>
            <person name="Copeland A."/>
            <person name="Lapidus A."/>
            <person name="Glavina del Rio T."/>
            <person name="Tice H."/>
            <person name="Bruce D."/>
            <person name="Goodwin L."/>
            <person name="Pitluck S."/>
            <person name="Chertkov O."/>
            <person name="Brettin T."/>
            <person name="Detter J.C."/>
            <person name="Han C."/>
            <person name="Schmutz J."/>
            <person name="Larimer F."/>
            <person name="Land M."/>
            <person name="Hauser L."/>
            <person name="Kyrpides N."/>
            <person name="Ovchinnikova G."/>
            <person name="Noll K."/>
        </authorList>
    </citation>
    <scope>NUCLEOTIDE SEQUENCE [LARGE SCALE GENOMIC DNA]</scope>
    <source>
        <strain>ATCC BAA-1733 / DSM 21960 / TBF 19.5.1</strain>
    </source>
</reference>
<accession>C5CDZ4</accession>
<protein>
    <recommendedName>
        <fullName evidence="2">Translation initiation factor IF-2</fullName>
    </recommendedName>
</protein>
<feature type="chain" id="PRO_1000202778" description="Translation initiation factor IF-2">
    <location>
        <begin position="1"/>
        <end position="695"/>
    </location>
</feature>
<feature type="domain" description="tr-type G">
    <location>
        <begin position="184"/>
        <end position="358"/>
    </location>
</feature>
<feature type="region of interest" description="Disordered" evidence="3">
    <location>
        <begin position="60"/>
        <end position="92"/>
    </location>
</feature>
<feature type="region of interest" description="G1" evidence="1">
    <location>
        <begin position="193"/>
        <end position="200"/>
    </location>
</feature>
<feature type="region of interest" description="G2" evidence="1">
    <location>
        <begin position="218"/>
        <end position="222"/>
    </location>
</feature>
<feature type="region of interest" description="G3" evidence="1">
    <location>
        <begin position="239"/>
        <end position="242"/>
    </location>
</feature>
<feature type="region of interest" description="G4" evidence="1">
    <location>
        <begin position="293"/>
        <end position="296"/>
    </location>
</feature>
<feature type="region of interest" description="G5" evidence="1">
    <location>
        <begin position="330"/>
        <end position="332"/>
    </location>
</feature>
<feature type="binding site" evidence="2">
    <location>
        <begin position="193"/>
        <end position="200"/>
    </location>
    <ligand>
        <name>GTP</name>
        <dbReference type="ChEBI" id="CHEBI:37565"/>
    </ligand>
</feature>
<feature type="binding site" evidence="2">
    <location>
        <begin position="239"/>
        <end position="243"/>
    </location>
    <ligand>
        <name>GTP</name>
        <dbReference type="ChEBI" id="CHEBI:37565"/>
    </ligand>
</feature>
<feature type="binding site" evidence="2">
    <location>
        <begin position="293"/>
        <end position="296"/>
    </location>
    <ligand>
        <name>GTP</name>
        <dbReference type="ChEBI" id="CHEBI:37565"/>
    </ligand>
</feature>
<dbReference type="EMBL" id="CP001634">
    <property type="protein sequence ID" value="ACR80096.1"/>
    <property type="molecule type" value="Genomic_DNA"/>
</dbReference>
<dbReference type="SMR" id="C5CDZ4"/>
<dbReference type="STRING" id="521045.Kole_1403"/>
<dbReference type="KEGG" id="kol:Kole_1403"/>
<dbReference type="eggNOG" id="COG0532">
    <property type="taxonomic scope" value="Bacteria"/>
</dbReference>
<dbReference type="HOGENOM" id="CLU_006301_5_1_0"/>
<dbReference type="OrthoDB" id="9811804at2"/>
<dbReference type="Proteomes" id="UP000002382">
    <property type="component" value="Chromosome"/>
</dbReference>
<dbReference type="GO" id="GO:0005829">
    <property type="term" value="C:cytosol"/>
    <property type="evidence" value="ECO:0007669"/>
    <property type="project" value="TreeGrafter"/>
</dbReference>
<dbReference type="GO" id="GO:0005525">
    <property type="term" value="F:GTP binding"/>
    <property type="evidence" value="ECO:0007669"/>
    <property type="project" value="UniProtKB-KW"/>
</dbReference>
<dbReference type="GO" id="GO:0003924">
    <property type="term" value="F:GTPase activity"/>
    <property type="evidence" value="ECO:0007669"/>
    <property type="project" value="UniProtKB-UniRule"/>
</dbReference>
<dbReference type="GO" id="GO:0003743">
    <property type="term" value="F:translation initiation factor activity"/>
    <property type="evidence" value="ECO:0007669"/>
    <property type="project" value="UniProtKB-UniRule"/>
</dbReference>
<dbReference type="CDD" id="cd01887">
    <property type="entry name" value="IF2_eIF5B"/>
    <property type="match status" value="1"/>
</dbReference>
<dbReference type="CDD" id="cd03702">
    <property type="entry name" value="IF2_mtIF2_II"/>
    <property type="match status" value="1"/>
</dbReference>
<dbReference type="CDD" id="cd03692">
    <property type="entry name" value="mtIF2_IVc"/>
    <property type="match status" value="1"/>
</dbReference>
<dbReference type="FunFam" id="2.40.30.10:FF:000008">
    <property type="entry name" value="Translation initiation factor IF-2"/>
    <property type="match status" value="1"/>
</dbReference>
<dbReference type="FunFam" id="2.40.30.10:FF:000054">
    <property type="entry name" value="Translation initiation factor IF-2"/>
    <property type="match status" value="1"/>
</dbReference>
<dbReference type="FunFam" id="3.40.50.10050:FF:000001">
    <property type="entry name" value="Translation initiation factor IF-2"/>
    <property type="match status" value="1"/>
</dbReference>
<dbReference type="FunFam" id="3.40.50.300:FF:000019">
    <property type="entry name" value="Translation initiation factor IF-2"/>
    <property type="match status" value="1"/>
</dbReference>
<dbReference type="Gene3D" id="1.10.10.2480">
    <property type="match status" value="1"/>
</dbReference>
<dbReference type="Gene3D" id="3.40.50.300">
    <property type="entry name" value="P-loop containing nucleotide triphosphate hydrolases"/>
    <property type="match status" value="1"/>
</dbReference>
<dbReference type="Gene3D" id="2.40.30.10">
    <property type="entry name" value="Translation factors"/>
    <property type="match status" value="2"/>
</dbReference>
<dbReference type="Gene3D" id="3.40.50.10050">
    <property type="entry name" value="Translation initiation factor IF- 2, domain 3"/>
    <property type="match status" value="1"/>
</dbReference>
<dbReference type="HAMAP" id="MF_00100_B">
    <property type="entry name" value="IF_2_B"/>
    <property type="match status" value="1"/>
</dbReference>
<dbReference type="InterPro" id="IPR053905">
    <property type="entry name" value="EF-G-like_DII"/>
</dbReference>
<dbReference type="InterPro" id="IPR044145">
    <property type="entry name" value="IF2_II"/>
</dbReference>
<dbReference type="InterPro" id="IPR006847">
    <property type="entry name" value="IF2_N"/>
</dbReference>
<dbReference type="InterPro" id="IPR027417">
    <property type="entry name" value="P-loop_NTPase"/>
</dbReference>
<dbReference type="InterPro" id="IPR005225">
    <property type="entry name" value="Small_GTP-bd"/>
</dbReference>
<dbReference type="InterPro" id="IPR000795">
    <property type="entry name" value="T_Tr_GTP-bd_dom"/>
</dbReference>
<dbReference type="InterPro" id="IPR000178">
    <property type="entry name" value="TF_IF2_bacterial-like"/>
</dbReference>
<dbReference type="InterPro" id="IPR015760">
    <property type="entry name" value="TIF_IF2"/>
</dbReference>
<dbReference type="InterPro" id="IPR023115">
    <property type="entry name" value="TIF_IF2_dom3"/>
</dbReference>
<dbReference type="InterPro" id="IPR036925">
    <property type="entry name" value="TIF_IF2_dom3_sf"/>
</dbReference>
<dbReference type="InterPro" id="IPR009000">
    <property type="entry name" value="Transl_B-barrel_sf"/>
</dbReference>
<dbReference type="NCBIfam" id="TIGR00487">
    <property type="entry name" value="IF-2"/>
    <property type="match status" value="1"/>
</dbReference>
<dbReference type="NCBIfam" id="TIGR00231">
    <property type="entry name" value="small_GTP"/>
    <property type="match status" value="1"/>
</dbReference>
<dbReference type="PANTHER" id="PTHR43381:SF5">
    <property type="entry name" value="TR-TYPE G DOMAIN-CONTAINING PROTEIN"/>
    <property type="match status" value="1"/>
</dbReference>
<dbReference type="PANTHER" id="PTHR43381">
    <property type="entry name" value="TRANSLATION INITIATION FACTOR IF-2-RELATED"/>
    <property type="match status" value="1"/>
</dbReference>
<dbReference type="Pfam" id="PF22042">
    <property type="entry name" value="EF-G_D2"/>
    <property type="match status" value="1"/>
</dbReference>
<dbReference type="Pfam" id="PF00009">
    <property type="entry name" value="GTP_EFTU"/>
    <property type="match status" value="1"/>
</dbReference>
<dbReference type="Pfam" id="PF11987">
    <property type="entry name" value="IF-2"/>
    <property type="match status" value="1"/>
</dbReference>
<dbReference type="Pfam" id="PF04760">
    <property type="entry name" value="IF2_N"/>
    <property type="match status" value="1"/>
</dbReference>
<dbReference type="SUPFAM" id="SSF52156">
    <property type="entry name" value="Initiation factor IF2/eIF5b, domain 3"/>
    <property type="match status" value="1"/>
</dbReference>
<dbReference type="SUPFAM" id="SSF52540">
    <property type="entry name" value="P-loop containing nucleoside triphosphate hydrolases"/>
    <property type="match status" value="1"/>
</dbReference>
<dbReference type="SUPFAM" id="SSF50447">
    <property type="entry name" value="Translation proteins"/>
    <property type="match status" value="2"/>
</dbReference>
<dbReference type="PROSITE" id="PS51722">
    <property type="entry name" value="G_TR_2"/>
    <property type="match status" value="1"/>
</dbReference>
<keyword id="KW-0963">Cytoplasm</keyword>
<keyword id="KW-0342">GTP-binding</keyword>
<keyword id="KW-0396">Initiation factor</keyword>
<keyword id="KW-0547">Nucleotide-binding</keyword>
<keyword id="KW-0648">Protein biosynthesis</keyword>
<keyword id="KW-1185">Reference proteome</keyword>
<evidence type="ECO:0000250" key="1"/>
<evidence type="ECO:0000255" key="2">
    <source>
        <dbReference type="HAMAP-Rule" id="MF_00100"/>
    </source>
</evidence>
<evidence type="ECO:0000256" key="3">
    <source>
        <dbReference type="SAM" id="MobiDB-lite"/>
    </source>
</evidence>
<name>IF2_KOSOT</name>
<comment type="function">
    <text evidence="2">One of the essential components for the initiation of protein synthesis. Protects formylmethionyl-tRNA from spontaneous hydrolysis and promotes its binding to the 30S ribosomal subunits. Also involved in the hydrolysis of GTP during the formation of the 70S ribosomal complex.</text>
</comment>
<comment type="subcellular location">
    <subcellularLocation>
        <location evidence="2">Cytoplasm</location>
    </subcellularLocation>
</comment>
<comment type="similarity">
    <text evidence="2">Belongs to the TRAFAC class translation factor GTPase superfamily. Classic translation factor GTPase family. IF-2 subfamily.</text>
</comment>
<sequence length="695" mass="77427">MAKTRVYELAKRLKITTRELIDELEELGVSVKSHMSVLDDEIVNIIVGLYEEEEKAAKIKKSASSKKKTEKEVEEEEIETPKKKKKQEEKIPGEEKVLRITPDELKLDLLAEKMRVPVSKIVKDHFMKGIILRPAQSLSLEDANQIAAQYGWKLEIEKEEMADPLEALKKKYEELYKDESRLVQRPPVVTVMGHVDHGKTTLLDRIRKTSIAEKEVGGITQSIGAYHVEVNGKKITFIDTPGHEAFTEMRARGAQATDIVILVVAADDGVMPQTVEAYNHAKTAQVPIIVAINKIDKPNASIEATKQQLASKLGLVPEDWGGDTIVVPISAKTGQGIDELLEMILLVAEMSEIKCIPTGNARGIIIESELDKGVGPLATVIVKDGILEAGDYIVAGATYGKVRALRDEKGKRVKKAVPGDPVQIIGFNEVPDVHAILYVVDSLDQAREVAAFAQEKQKKEKLLKGKRHVRLEEFMRIGGKDETKVLNLILKSDSFGSVEALRQTIAKLETEEVHIEVVHFGIGTINASDVMLAAASDAVIIGYKVKPDSQARRQAEEEGVQIRVYQVIFDLIDDLKKALEGLLEPEEIDETVGHGEIRKVFKIKKVGSIAGVQLLDGYVTKKGFVRIYRNNQEIFDGEIESLKHYKDEVSRIDAPKECGIKFLNFDDIQEGDQLEFHVKRKVKRTLDFNESSSDS</sequence>
<organism>
    <name type="scientific">Kosmotoga olearia (strain ATCC BAA-1733 / DSM 21960 / TBF 19.5.1)</name>
    <dbReference type="NCBI Taxonomy" id="521045"/>
    <lineage>
        <taxon>Bacteria</taxon>
        <taxon>Thermotogati</taxon>
        <taxon>Thermotogota</taxon>
        <taxon>Thermotogae</taxon>
        <taxon>Kosmotogales</taxon>
        <taxon>Kosmotogaceae</taxon>
        <taxon>Kosmotoga</taxon>
    </lineage>
</organism>
<proteinExistence type="inferred from homology"/>